<sequence length="92" mass="10742">MARTVNCVHLNKEADGLDFQLYPGDLGKRIFDNISKEAWGLWQKKQTMLINEKKLNMMNVDDRKFLEAQMTSFLFEGKDVEIEGFVPEKDQD</sequence>
<name>FETP_SHEON</name>
<comment type="function">
    <text evidence="1">Could be a mediator in iron transactions between iron acquisition and iron-requiring processes, such as synthesis and/or repair of Fe-S clusters in biosynthetic enzymes.</text>
</comment>
<comment type="similarity">
    <text evidence="1">Belongs to the Fe(2+)-trafficking protein family.</text>
</comment>
<keyword id="KW-0408">Iron</keyword>
<keyword id="KW-1185">Reference proteome</keyword>
<accession>Q8EBX6</accession>
<organism>
    <name type="scientific">Shewanella oneidensis (strain ATCC 700550 / JCM 31522 / CIP 106686 / LMG 19005 / NCIMB 14063 / MR-1)</name>
    <dbReference type="NCBI Taxonomy" id="211586"/>
    <lineage>
        <taxon>Bacteria</taxon>
        <taxon>Pseudomonadati</taxon>
        <taxon>Pseudomonadota</taxon>
        <taxon>Gammaproteobacteria</taxon>
        <taxon>Alteromonadales</taxon>
        <taxon>Shewanellaceae</taxon>
        <taxon>Shewanella</taxon>
    </lineage>
</organism>
<reference key="1">
    <citation type="journal article" date="2002" name="Nat. Biotechnol.">
        <title>Genome sequence of the dissimilatory metal ion-reducing bacterium Shewanella oneidensis.</title>
        <authorList>
            <person name="Heidelberg J.F."/>
            <person name="Paulsen I.T."/>
            <person name="Nelson K.E."/>
            <person name="Gaidos E.J."/>
            <person name="Nelson W.C."/>
            <person name="Read T.D."/>
            <person name="Eisen J.A."/>
            <person name="Seshadri R."/>
            <person name="Ward N.L."/>
            <person name="Methe B.A."/>
            <person name="Clayton R.A."/>
            <person name="Meyer T."/>
            <person name="Tsapin A."/>
            <person name="Scott J."/>
            <person name="Beanan M.J."/>
            <person name="Brinkac L.M."/>
            <person name="Daugherty S.C."/>
            <person name="DeBoy R.T."/>
            <person name="Dodson R.J."/>
            <person name="Durkin A.S."/>
            <person name="Haft D.H."/>
            <person name="Kolonay J.F."/>
            <person name="Madupu R."/>
            <person name="Peterson J.D."/>
            <person name="Umayam L.A."/>
            <person name="White O."/>
            <person name="Wolf A.M."/>
            <person name="Vamathevan J.J."/>
            <person name="Weidman J.F."/>
            <person name="Impraim M."/>
            <person name="Lee K."/>
            <person name="Berry K.J."/>
            <person name="Lee C."/>
            <person name="Mueller J."/>
            <person name="Khouri H.M."/>
            <person name="Gill J."/>
            <person name="Utterback T.R."/>
            <person name="McDonald L.A."/>
            <person name="Feldblyum T.V."/>
            <person name="Smith H.O."/>
            <person name="Venter J.C."/>
            <person name="Nealson K.H."/>
            <person name="Fraser C.M."/>
        </authorList>
    </citation>
    <scope>NUCLEOTIDE SEQUENCE [LARGE SCALE GENOMIC DNA]</scope>
    <source>
        <strain>ATCC 700550 / JCM 31522 / CIP 106686 / LMG 19005 / NCIMB 14063 / MR-1</strain>
    </source>
</reference>
<feature type="chain" id="PRO_0000214506" description="Probable Fe(2+)-trafficking protein">
    <location>
        <begin position="1"/>
        <end position="92"/>
    </location>
</feature>
<gene>
    <name type="ordered locus">SO_3369</name>
</gene>
<evidence type="ECO:0000255" key="1">
    <source>
        <dbReference type="HAMAP-Rule" id="MF_00686"/>
    </source>
</evidence>
<proteinExistence type="inferred from homology"/>
<protein>
    <recommendedName>
        <fullName evidence="1">Probable Fe(2+)-trafficking protein</fullName>
    </recommendedName>
</protein>
<dbReference type="EMBL" id="AE014299">
    <property type="protein sequence ID" value="AAN56367.1"/>
    <property type="molecule type" value="Genomic_DNA"/>
</dbReference>
<dbReference type="RefSeq" id="NP_718923.1">
    <property type="nucleotide sequence ID" value="NC_004347.2"/>
</dbReference>
<dbReference type="RefSeq" id="WP_011073237.1">
    <property type="nucleotide sequence ID" value="NC_004347.2"/>
</dbReference>
<dbReference type="SMR" id="Q8EBX6"/>
<dbReference type="STRING" id="211586.SO_3369"/>
<dbReference type="PaxDb" id="211586-SO_3369"/>
<dbReference type="KEGG" id="son:SO_3369"/>
<dbReference type="PATRIC" id="fig|211586.12.peg.3269"/>
<dbReference type="eggNOG" id="COG2924">
    <property type="taxonomic scope" value="Bacteria"/>
</dbReference>
<dbReference type="HOGENOM" id="CLU_170994_0_0_6"/>
<dbReference type="OrthoDB" id="9804318at2"/>
<dbReference type="PhylomeDB" id="Q8EBX6"/>
<dbReference type="BioCyc" id="SONE211586:G1GMP-3135-MONOMER"/>
<dbReference type="Proteomes" id="UP000008186">
    <property type="component" value="Chromosome"/>
</dbReference>
<dbReference type="GO" id="GO:0005829">
    <property type="term" value="C:cytosol"/>
    <property type="evidence" value="ECO:0000318"/>
    <property type="project" value="GO_Central"/>
</dbReference>
<dbReference type="GO" id="GO:0005506">
    <property type="term" value="F:iron ion binding"/>
    <property type="evidence" value="ECO:0007669"/>
    <property type="project" value="UniProtKB-UniRule"/>
</dbReference>
<dbReference type="GO" id="GO:0034599">
    <property type="term" value="P:cellular response to oxidative stress"/>
    <property type="evidence" value="ECO:0000318"/>
    <property type="project" value="GO_Central"/>
</dbReference>
<dbReference type="FunFam" id="1.10.3880.10:FF:000001">
    <property type="entry name" value="Probable Fe(2+)-trafficking protein"/>
    <property type="match status" value="1"/>
</dbReference>
<dbReference type="Gene3D" id="1.10.3880.10">
    <property type="entry name" value="Fe(II) trafficking protein YggX"/>
    <property type="match status" value="1"/>
</dbReference>
<dbReference type="HAMAP" id="MF_00686">
    <property type="entry name" value="Fe_traffic_YggX"/>
    <property type="match status" value="1"/>
</dbReference>
<dbReference type="InterPro" id="IPR007457">
    <property type="entry name" value="Fe_traffick_prot_YggX"/>
</dbReference>
<dbReference type="InterPro" id="IPR036766">
    <property type="entry name" value="Fe_traffick_prot_YggX_sf"/>
</dbReference>
<dbReference type="NCBIfam" id="NF003817">
    <property type="entry name" value="PRK05408.1"/>
    <property type="match status" value="1"/>
</dbReference>
<dbReference type="PANTHER" id="PTHR36965">
    <property type="entry name" value="FE(2+)-TRAFFICKING PROTEIN-RELATED"/>
    <property type="match status" value="1"/>
</dbReference>
<dbReference type="PANTHER" id="PTHR36965:SF1">
    <property type="entry name" value="FE(2+)-TRAFFICKING PROTEIN-RELATED"/>
    <property type="match status" value="1"/>
</dbReference>
<dbReference type="Pfam" id="PF04362">
    <property type="entry name" value="Iron_traffic"/>
    <property type="match status" value="1"/>
</dbReference>
<dbReference type="PIRSF" id="PIRSF029827">
    <property type="entry name" value="Fe_traffic_YggX"/>
    <property type="match status" value="1"/>
</dbReference>
<dbReference type="SUPFAM" id="SSF111148">
    <property type="entry name" value="YggX-like"/>
    <property type="match status" value="1"/>
</dbReference>